<gene>
    <name evidence="1" type="primary">prfB</name>
    <name type="ordered locus">Mkms_1633</name>
</gene>
<protein>
    <recommendedName>
        <fullName evidence="1">Peptide chain release factor 2</fullName>
        <shortName evidence="1">RF-2</shortName>
    </recommendedName>
</protein>
<sequence>MDPDRQADIAALAATLTTVERVLDVDGLRDRIQKLEQEASDPNLWDDQSRAQKVTSELSHAQNELRRVEELRQRVEDLPVLYEMAAEEEGQDAENAGAEADAELAKLRVDIEAMEVRTLLSGEYDEREAVVTIRSGAGGVDAADWAEMLMRMYIRWAEQHDYPVEVFDTSYAEEAGIKSATFAVHAPYAYGTLSVEQGTHRLVRISPFDNQSRRQTSFADVEVLPVVETTDHIDVPETDLRVDVYRSSGPGGQSVNTTDSAVRLTHIPTGIVVTCQNEKSQLQNKVAAMRVLQAKLLARKKQEERAELDALKGDGGSSWGNQMRSYVLHPYQMVKDLRTEYEVGNPSAVLDGDIDGFLEAGIRWRNRRDDD</sequence>
<comment type="function">
    <text evidence="1">Peptide chain release factor 2 directs the termination of translation in response to the peptide chain termination codons UGA and UAA.</text>
</comment>
<comment type="subcellular location">
    <subcellularLocation>
        <location evidence="1">Cytoplasm</location>
    </subcellularLocation>
</comment>
<comment type="PTM">
    <text evidence="1">Methylated by PrmC. Methylation increases the termination efficiency of RF2.</text>
</comment>
<comment type="similarity">
    <text evidence="1">Belongs to the prokaryotic/mitochondrial release factor family.</text>
</comment>
<proteinExistence type="inferred from homology"/>
<feature type="chain" id="PRO_1000005001" description="Peptide chain release factor 2">
    <location>
        <begin position="1"/>
        <end position="371"/>
    </location>
</feature>
<feature type="modified residue" description="N5-methylglutamine" evidence="1">
    <location>
        <position position="253"/>
    </location>
</feature>
<reference key="1">
    <citation type="submission" date="2006-12" db="EMBL/GenBank/DDBJ databases">
        <title>Complete sequence of chromosome of Mycobacterium sp. KMS.</title>
        <authorList>
            <consortium name="US DOE Joint Genome Institute"/>
            <person name="Copeland A."/>
            <person name="Lucas S."/>
            <person name="Lapidus A."/>
            <person name="Barry K."/>
            <person name="Detter J.C."/>
            <person name="Glavina del Rio T."/>
            <person name="Hammon N."/>
            <person name="Israni S."/>
            <person name="Dalin E."/>
            <person name="Tice H."/>
            <person name="Pitluck S."/>
            <person name="Kiss H."/>
            <person name="Brettin T."/>
            <person name="Bruce D."/>
            <person name="Han C."/>
            <person name="Tapia R."/>
            <person name="Gilna P."/>
            <person name="Schmutz J."/>
            <person name="Larimer F."/>
            <person name="Land M."/>
            <person name="Hauser L."/>
            <person name="Kyrpides N."/>
            <person name="Mikhailova N."/>
            <person name="Miller C.D."/>
            <person name="Richardson P."/>
        </authorList>
    </citation>
    <scope>NUCLEOTIDE SEQUENCE [LARGE SCALE GENOMIC DNA]</scope>
    <source>
        <strain>KMS</strain>
    </source>
</reference>
<name>RF2_MYCSK</name>
<accession>A1UDD2</accession>
<keyword id="KW-0963">Cytoplasm</keyword>
<keyword id="KW-0488">Methylation</keyword>
<keyword id="KW-0648">Protein biosynthesis</keyword>
<evidence type="ECO:0000255" key="1">
    <source>
        <dbReference type="HAMAP-Rule" id="MF_00094"/>
    </source>
</evidence>
<dbReference type="EMBL" id="CP000518">
    <property type="protein sequence ID" value="ABL90840.1"/>
    <property type="molecule type" value="Genomic_DNA"/>
</dbReference>
<dbReference type="SMR" id="A1UDD2"/>
<dbReference type="STRING" id="189918.Mkms_1633"/>
<dbReference type="KEGG" id="mkm:Mkms_1633"/>
<dbReference type="HOGENOM" id="CLU_036856_6_0_11"/>
<dbReference type="OrthoDB" id="9806673at2"/>
<dbReference type="GO" id="GO:0005737">
    <property type="term" value="C:cytoplasm"/>
    <property type="evidence" value="ECO:0007669"/>
    <property type="project" value="UniProtKB-SubCell"/>
</dbReference>
<dbReference type="GO" id="GO:0016149">
    <property type="term" value="F:translation release factor activity, codon specific"/>
    <property type="evidence" value="ECO:0007669"/>
    <property type="project" value="UniProtKB-UniRule"/>
</dbReference>
<dbReference type="FunFam" id="3.30.160.20:FF:000010">
    <property type="entry name" value="Peptide chain release factor 2"/>
    <property type="match status" value="1"/>
</dbReference>
<dbReference type="Gene3D" id="3.30.160.20">
    <property type="match status" value="1"/>
</dbReference>
<dbReference type="Gene3D" id="3.30.70.1660">
    <property type="match status" value="1"/>
</dbReference>
<dbReference type="Gene3D" id="1.20.58.410">
    <property type="entry name" value="Release factor"/>
    <property type="match status" value="1"/>
</dbReference>
<dbReference type="HAMAP" id="MF_00094">
    <property type="entry name" value="Rel_fac_2"/>
    <property type="match status" value="1"/>
</dbReference>
<dbReference type="InterPro" id="IPR005139">
    <property type="entry name" value="PCRF"/>
</dbReference>
<dbReference type="InterPro" id="IPR000352">
    <property type="entry name" value="Pep_chain_release_fac_I"/>
</dbReference>
<dbReference type="InterPro" id="IPR045853">
    <property type="entry name" value="Pep_chain_release_fac_I_sf"/>
</dbReference>
<dbReference type="InterPro" id="IPR004374">
    <property type="entry name" value="PrfB"/>
</dbReference>
<dbReference type="NCBIfam" id="TIGR00020">
    <property type="entry name" value="prfB"/>
    <property type="match status" value="1"/>
</dbReference>
<dbReference type="PANTHER" id="PTHR43116:SF3">
    <property type="entry name" value="CLASS I PEPTIDE CHAIN RELEASE FACTOR"/>
    <property type="match status" value="1"/>
</dbReference>
<dbReference type="PANTHER" id="PTHR43116">
    <property type="entry name" value="PEPTIDE CHAIN RELEASE FACTOR 2"/>
    <property type="match status" value="1"/>
</dbReference>
<dbReference type="Pfam" id="PF03462">
    <property type="entry name" value="PCRF"/>
    <property type="match status" value="1"/>
</dbReference>
<dbReference type="Pfam" id="PF00472">
    <property type="entry name" value="RF-1"/>
    <property type="match status" value="1"/>
</dbReference>
<dbReference type="SMART" id="SM00937">
    <property type="entry name" value="PCRF"/>
    <property type="match status" value="1"/>
</dbReference>
<dbReference type="SUPFAM" id="SSF75620">
    <property type="entry name" value="Release factor"/>
    <property type="match status" value="1"/>
</dbReference>
<dbReference type="PROSITE" id="PS00745">
    <property type="entry name" value="RF_PROK_I"/>
    <property type="match status" value="1"/>
</dbReference>
<organism>
    <name type="scientific">Mycobacterium sp. (strain KMS)</name>
    <dbReference type="NCBI Taxonomy" id="189918"/>
    <lineage>
        <taxon>Bacteria</taxon>
        <taxon>Bacillati</taxon>
        <taxon>Actinomycetota</taxon>
        <taxon>Actinomycetes</taxon>
        <taxon>Mycobacteriales</taxon>
        <taxon>Mycobacteriaceae</taxon>
        <taxon>Mycobacterium</taxon>
    </lineage>
</organism>